<reference key="1">
    <citation type="journal article" date="2004" name="J. Bacteriol.">
        <title>The genome sequence of Mycoplasma hyopneumoniae strain 232, the agent of swine mycoplasmosis.</title>
        <authorList>
            <person name="Minion F.C."/>
            <person name="Lefkowitz E.J."/>
            <person name="Madsen M.L."/>
            <person name="Cleary B.J."/>
            <person name="Swartzell S.M."/>
            <person name="Mahairas G.G."/>
        </authorList>
    </citation>
    <scope>NUCLEOTIDE SEQUENCE [LARGE SCALE GENOMIC DNA]</scope>
    <source>
        <strain>232</strain>
    </source>
</reference>
<feature type="chain" id="PRO_0000345839" description="tRNA modification GTPase MnmE">
    <location>
        <begin position="1"/>
        <end position="442"/>
    </location>
</feature>
<feature type="domain" description="TrmE-type G">
    <location>
        <begin position="216"/>
        <end position="366"/>
    </location>
</feature>
<feature type="binding site" evidence="1">
    <location>
        <position position="22"/>
    </location>
    <ligand>
        <name>(6S)-5-formyl-5,6,7,8-tetrahydrofolate</name>
        <dbReference type="ChEBI" id="CHEBI:57457"/>
    </ligand>
</feature>
<feature type="binding site" evidence="1">
    <location>
        <position position="79"/>
    </location>
    <ligand>
        <name>(6S)-5-formyl-5,6,7,8-tetrahydrofolate</name>
        <dbReference type="ChEBI" id="CHEBI:57457"/>
    </ligand>
</feature>
<feature type="binding site" evidence="1">
    <location>
        <position position="119"/>
    </location>
    <ligand>
        <name>(6S)-5-formyl-5,6,7,8-tetrahydrofolate</name>
        <dbReference type="ChEBI" id="CHEBI:57457"/>
    </ligand>
</feature>
<feature type="binding site" evidence="1">
    <location>
        <begin position="226"/>
        <end position="231"/>
    </location>
    <ligand>
        <name>GTP</name>
        <dbReference type="ChEBI" id="CHEBI:37565"/>
    </ligand>
</feature>
<feature type="binding site" evidence="1">
    <location>
        <position position="226"/>
    </location>
    <ligand>
        <name>K(+)</name>
        <dbReference type="ChEBI" id="CHEBI:29103"/>
    </ligand>
</feature>
<feature type="binding site" evidence="1">
    <location>
        <position position="230"/>
    </location>
    <ligand>
        <name>Mg(2+)</name>
        <dbReference type="ChEBI" id="CHEBI:18420"/>
    </ligand>
</feature>
<feature type="binding site" evidence="1">
    <location>
        <begin position="245"/>
        <end position="251"/>
    </location>
    <ligand>
        <name>GTP</name>
        <dbReference type="ChEBI" id="CHEBI:37565"/>
    </ligand>
</feature>
<feature type="binding site" evidence="1">
    <location>
        <position position="245"/>
    </location>
    <ligand>
        <name>K(+)</name>
        <dbReference type="ChEBI" id="CHEBI:29103"/>
    </ligand>
</feature>
<feature type="binding site" evidence="1">
    <location>
        <position position="247"/>
    </location>
    <ligand>
        <name>K(+)</name>
        <dbReference type="ChEBI" id="CHEBI:29103"/>
    </ligand>
</feature>
<feature type="binding site" evidence="1">
    <location>
        <position position="250"/>
    </location>
    <ligand>
        <name>K(+)</name>
        <dbReference type="ChEBI" id="CHEBI:29103"/>
    </ligand>
</feature>
<feature type="binding site" evidence="1">
    <location>
        <position position="251"/>
    </location>
    <ligand>
        <name>Mg(2+)</name>
        <dbReference type="ChEBI" id="CHEBI:18420"/>
    </ligand>
</feature>
<feature type="binding site" evidence="1">
    <location>
        <begin position="270"/>
        <end position="273"/>
    </location>
    <ligand>
        <name>GTP</name>
        <dbReference type="ChEBI" id="CHEBI:37565"/>
    </ligand>
</feature>
<feature type="binding site" evidence="1">
    <location>
        <position position="442"/>
    </location>
    <ligand>
        <name>(6S)-5-formyl-5,6,7,8-tetrahydrofolate</name>
        <dbReference type="ChEBI" id="CHEBI:57457"/>
    </ligand>
</feature>
<dbReference type="EC" id="3.6.-.-" evidence="1"/>
<dbReference type="EMBL" id="AE017332">
    <property type="protein sequence ID" value="AAV27440.1"/>
    <property type="molecule type" value="Genomic_DNA"/>
</dbReference>
<dbReference type="RefSeq" id="WP_011206009.1">
    <property type="nucleotide sequence ID" value="NC_006360.1"/>
</dbReference>
<dbReference type="SMR" id="Q601N0"/>
<dbReference type="KEGG" id="mhy:mhp172"/>
<dbReference type="eggNOG" id="COG0486">
    <property type="taxonomic scope" value="Bacteria"/>
</dbReference>
<dbReference type="HOGENOM" id="CLU_019624_4_1_14"/>
<dbReference type="PhylomeDB" id="Q601N0"/>
<dbReference type="Proteomes" id="UP000006822">
    <property type="component" value="Chromosome"/>
</dbReference>
<dbReference type="GO" id="GO:0005829">
    <property type="term" value="C:cytosol"/>
    <property type="evidence" value="ECO:0007669"/>
    <property type="project" value="TreeGrafter"/>
</dbReference>
<dbReference type="GO" id="GO:0005525">
    <property type="term" value="F:GTP binding"/>
    <property type="evidence" value="ECO:0007669"/>
    <property type="project" value="UniProtKB-UniRule"/>
</dbReference>
<dbReference type="GO" id="GO:0003924">
    <property type="term" value="F:GTPase activity"/>
    <property type="evidence" value="ECO:0007669"/>
    <property type="project" value="UniProtKB-UniRule"/>
</dbReference>
<dbReference type="GO" id="GO:0046872">
    <property type="term" value="F:metal ion binding"/>
    <property type="evidence" value="ECO:0007669"/>
    <property type="project" value="UniProtKB-KW"/>
</dbReference>
<dbReference type="GO" id="GO:0030488">
    <property type="term" value="P:tRNA methylation"/>
    <property type="evidence" value="ECO:0007669"/>
    <property type="project" value="TreeGrafter"/>
</dbReference>
<dbReference type="GO" id="GO:0002098">
    <property type="term" value="P:tRNA wobble uridine modification"/>
    <property type="evidence" value="ECO:0007669"/>
    <property type="project" value="TreeGrafter"/>
</dbReference>
<dbReference type="CDD" id="cd04164">
    <property type="entry name" value="trmE"/>
    <property type="match status" value="1"/>
</dbReference>
<dbReference type="CDD" id="cd14858">
    <property type="entry name" value="TrmE_N"/>
    <property type="match status" value="1"/>
</dbReference>
<dbReference type="Gene3D" id="3.40.50.300">
    <property type="entry name" value="P-loop containing nucleotide triphosphate hydrolases"/>
    <property type="match status" value="1"/>
</dbReference>
<dbReference type="Gene3D" id="3.30.1360.120">
    <property type="entry name" value="Probable tRNA modification gtpase trme, domain 1"/>
    <property type="match status" value="1"/>
</dbReference>
<dbReference type="Gene3D" id="1.20.120.430">
    <property type="entry name" value="tRNA modification GTPase MnmE domain 2"/>
    <property type="match status" value="1"/>
</dbReference>
<dbReference type="HAMAP" id="MF_00379">
    <property type="entry name" value="GTPase_MnmE"/>
    <property type="match status" value="1"/>
</dbReference>
<dbReference type="InterPro" id="IPR031168">
    <property type="entry name" value="G_TrmE"/>
</dbReference>
<dbReference type="InterPro" id="IPR006073">
    <property type="entry name" value="GTP-bd"/>
</dbReference>
<dbReference type="InterPro" id="IPR018948">
    <property type="entry name" value="GTP-bd_TrmE_N"/>
</dbReference>
<dbReference type="InterPro" id="IPR004520">
    <property type="entry name" value="GTPase_MnmE"/>
</dbReference>
<dbReference type="InterPro" id="IPR027368">
    <property type="entry name" value="MnmE_dom2"/>
</dbReference>
<dbReference type="InterPro" id="IPR025867">
    <property type="entry name" value="MnmE_helical"/>
</dbReference>
<dbReference type="InterPro" id="IPR027417">
    <property type="entry name" value="P-loop_NTPase"/>
</dbReference>
<dbReference type="InterPro" id="IPR005225">
    <property type="entry name" value="Small_GTP-bd"/>
</dbReference>
<dbReference type="InterPro" id="IPR027266">
    <property type="entry name" value="TrmE/GcvT_dom1"/>
</dbReference>
<dbReference type="NCBIfam" id="TIGR00450">
    <property type="entry name" value="mnmE_trmE_thdF"/>
    <property type="match status" value="1"/>
</dbReference>
<dbReference type="NCBIfam" id="TIGR00231">
    <property type="entry name" value="small_GTP"/>
    <property type="match status" value="1"/>
</dbReference>
<dbReference type="PANTHER" id="PTHR42714">
    <property type="entry name" value="TRNA MODIFICATION GTPASE GTPBP3"/>
    <property type="match status" value="1"/>
</dbReference>
<dbReference type="PANTHER" id="PTHR42714:SF2">
    <property type="entry name" value="TRNA MODIFICATION GTPASE GTPBP3, MITOCHONDRIAL"/>
    <property type="match status" value="1"/>
</dbReference>
<dbReference type="Pfam" id="PF01926">
    <property type="entry name" value="MMR_HSR1"/>
    <property type="match status" value="1"/>
</dbReference>
<dbReference type="Pfam" id="PF12631">
    <property type="entry name" value="MnmE_helical"/>
    <property type="match status" value="1"/>
</dbReference>
<dbReference type="Pfam" id="PF10396">
    <property type="entry name" value="TrmE_N"/>
    <property type="match status" value="1"/>
</dbReference>
<dbReference type="PRINTS" id="PR00326">
    <property type="entry name" value="GTP1OBG"/>
</dbReference>
<dbReference type="SUPFAM" id="SSF103025">
    <property type="entry name" value="Folate-binding domain"/>
    <property type="match status" value="1"/>
</dbReference>
<dbReference type="SUPFAM" id="SSF52540">
    <property type="entry name" value="P-loop containing nucleoside triphosphate hydrolases"/>
    <property type="match status" value="1"/>
</dbReference>
<dbReference type="SUPFAM" id="SSF116878">
    <property type="entry name" value="TrmE connector domain"/>
    <property type="match status" value="1"/>
</dbReference>
<dbReference type="PROSITE" id="PS51709">
    <property type="entry name" value="G_TRME"/>
    <property type="match status" value="1"/>
</dbReference>
<gene>
    <name evidence="1" type="primary">mnmE</name>
    <name evidence="1" type="synonym">trmE</name>
    <name type="ordered locus">mhp172</name>
</gene>
<name>MNME_MESH2</name>
<sequence>MLSDTICAIASGQINQAISIIRISGPNAFKIMEKIFLGKVGKSMEITFGWIHDDNQKIDQVLVLWFAGNKNFVGEDTVEINAHGGVLNTNLILELILKTKLARLANPGEFSLRAFLNGKIDLVKAQAINDLIHAEVKVQHQAALNQFLGKSSNFIKNLIEKIEEIIGIIEVNIDYPEYDDVEILTSDVLLPRINQLLADFDQLIKIANNSRLIYQGIKTCLVGAPNSGKSSLLNILINENKAIISEIPGTTRDVVEGNFVLDGLLFKLFDTAGIRKTTEKIEQIGIEKSYESIKKADLILHIIDASEKNRQNLDLKAKTRPDQIYLKIYNKSDLLENQEEFKDEILISAKYQKIENLLEKIKSIFAFLGKNKEFVANSFQISQIELGKLAILDAKTSLESGFGPEIAIVDLRIAWKELKTIFGRVDDENLLDSIFSKFCLGK</sequence>
<evidence type="ECO:0000255" key="1">
    <source>
        <dbReference type="HAMAP-Rule" id="MF_00379"/>
    </source>
</evidence>
<comment type="function">
    <text evidence="1">Exhibits a very high intrinsic GTPase hydrolysis rate. Involved in the addition of a carboxymethylaminomethyl (cmnm) group at the wobble position (U34) of certain tRNAs, forming tRNA-cmnm(5)s(2)U34.</text>
</comment>
<comment type="cofactor">
    <cofactor evidence="1">
        <name>K(+)</name>
        <dbReference type="ChEBI" id="CHEBI:29103"/>
    </cofactor>
    <text evidence="1">Binds 1 potassium ion per subunit.</text>
</comment>
<comment type="subunit">
    <text evidence="1">Homodimer. Heterotetramer of two MnmE and two MnmG subunits.</text>
</comment>
<comment type="subcellular location">
    <subcellularLocation>
        <location evidence="1">Cytoplasm</location>
    </subcellularLocation>
</comment>
<comment type="similarity">
    <text evidence="1">Belongs to the TRAFAC class TrmE-Era-EngA-EngB-Septin-like GTPase superfamily. TrmE GTPase family.</text>
</comment>
<proteinExistence type="inferred from homology"/>
<protein>
    <recommendedName>
        <fullName evidence="1">tRNA modification GTPase MnmE</fullName>
        <ecNumber evidence="1">3.6.-.-</ecNumber>
    </recommendedName>
</protein>
<accession>Q601N0</accession>
<keyword id="KW-0963">Cytoplasm</keyword>
<keyword id="KW-0342">GTP-binding</keyword>
<keyword id="KW-0378">Hydrolase</keyword>
<keyword id="KW-0460">Magnesium</keyword>
<keyword id="KW-0479">Metal-binding</keyword>
<keyword id="KW-0547">Nucleotide-binding</keyword>
<keyword id="KW-0630">Potassium</keyword>
<keyword id="KW-0819">tRNA processing</keyword>
<organism>
    <name type="scientific">Mesomycoplasma hyopneumoniae (strain 232)</name>
    <name type="common">Mycoplasma hyopneumoniae</name>
    <dbReference type="NCBI Taxonomy" id="295358"/>
    <lineage>
        <taxon>Bacteria</taxon>
        <taxon>Bacillati</taxon>
        <taxon>Mycoplasmatota</taxon>
        <taxon>Mycoplasmoidales</taxon>
        <taxon>Metamycoplasmataceae</taxon>
        <taxon>Mesomycoplasma</taxon>
    </lineage>
</organism>